<evidence type="ECO:0000255" key="1">
    <source>
        <dbReference type="HAMAP-Rule" id="MF_00003"/>
    </source>
</evidence>
<accession>A5UZQ3</accession>
<organism>
    <name type="scientific">Roseiflexus sp. (strain RS-1)</name>
    <dbReference type="NCBI Taxonomy" id="357808"/>
    <lineage>
        <taxon>Bacteria</taxon>
        <taxon>Bacillati</taxon>
        <taxon>Chloroflexota</taxon>
        <taxon>Chloroflexia</taxon>
        <taxon>Chloroflexales</taxon>
        <taxon>Roseiflexineae</taxon>
        <taxon>Roseiflexaceae</taxon>
        <taxon>Roseiflexus</taxon>
    </lineage>
</organism>
<comment type="function">
    <text evidence="1">One of several proteins that assist in the late maturation steps of the functional core of the 30S ribosomal subunit. Associates with free 30S ribosomal subunits (but not with 30S subunits that are part of 70S ribosomes or polysomes). Required for efficient processing of 16S rRNA. May interact with the 5'-terminal helix region of 16S rRNA.</text>
</comment>
<comment type="subunit">
    <text evidence="1">Monomer. Binds 30S ribosomal subunits, but not 50S ribosomal subunits or 70S ribosomes.</text>
</comment>
<comment type="subcellular location">
    <subcellularLocation>
        <location evidence="1">Cytoplasm</location>
    </subcellularLocation>
</comment>
<comment type="similarity">
    <text evidence="1">Belongs to the RbfA family.</text>
</comment>
<reference key="1">
    <citation type="submission" date="2007-04" db="EMBL/GenBank/DDBJ databases">
        <title>Complete sequence of Roseiflexus sp. RS-1.</title>
        <authorList>
            <consortium name="US DOE Joint Genome Institute"/>
            <person name="Copeland A."/>
            <person name="Lucas S."/>
            <person name="Lapidus A."/>
            <person name="Barry K."/>
            <person name="Detter J.C."/>
            <person name="Glavina del Rio T."/>
            <person name="Hammon N."/>
            <person name="Israni S."/>
            <person name="Dalin E."/>
            <person name="Tice H."/>
            <person name="Pitluck S."/>
            <person name="Chertkov O."/>
            <person name="Brettin T."/>
            <person name="Bruce D."/>
            <person name="Han C."/>
            <person name="Schmutz J."/>
            <person name="Larimer F."/>
            <person name="Land M."/>
            <person name="Hauser L."/>
            <person name="Kyrpides N."/>
            <person name="Mikhailova N."/>
            <person name="Bryant D.A."/>
            <person name="Richardson P."/>
        </authorList>
    </citation>
    <scope>NUCLEOTIDE SEQUENCE [LARGE SCALE GENOMIC DNA]</scope>
    <source>
        <strain>RS-1</strain>
    </source>
</reference>
<sequence>MSKRTEQLGHEIQRILGEVIQYELKDPRVGFATVVGVEVTADLQIARVRISVMGTPDERRETMAALERARGFLRRRLAEELNYLRFVPELRLILDTSVDYSLHIDELLRRAAEERADSPPQQPEDDKPAE</sequence>
<protein>
    <recommendedName>
        <fullName evidence="1">Ribosome-binding factor A</fullName>
    </recommendedName>
</protein>
<gene>
    <name evidence="1" type="primary">rbfA</name>
    <name type="ordered locus">RoseRS_3752</name>
</gene>
<proteinExistence type="inferred from homology"/>
<name>RBFA_ROSS1</name>
<keyword id="KW-0963">Cytoplasm</keyword>
<keyword id="KW-0690">Ribosome biogenesis</keyword>
<dbReference type="EMBL" id="CP000686">
    <property type="protein sequence ID" value="ABQ92106.1"/>
    <property type="molecule type" value="Genomic_DNA"/>
</dbReference>
<dbReference type="RefSeq" id="WP_011958448.1">
    <property type="nucleotide sequence ID" value="NC_009523.1"/>
</dbReference>
<dbReference type="SMR" id="A5UZQ3"/>
<dbReference type="STRING" id="357808.RoseRS_3752"/>
<dbReference type="KEGG" id="rrs:RoseRS_3752"/>
<dbReference type="eggNOG" id="COG0858">
    <property type="taxonomic scope" value="Bacteria"/>
</dbReference>
<dbReference type="HOGENOM" id="CLU_089475_6_3_0"/>
<dbReference type="OrthoDB" id="307788at2"/>
<dbReference type="Proteomes" id="UP000006554">
    <property type="component" value="Chromosome"/>
</dbReference>
<dbReference type="GO" id="GO:0005829">
    <property type="term" value="C:cytosol"/>
    <property type="evidence" value="ECO:0007669"/>
    <property type="project" value="TreeGrafter"/>
</dbReference>
<dbReference type="GO" id="GO:0043024">
    <property type="term" value="F:ribosomal small subunit binding"/>
    <property type="evidence" value="ECO:0007669"/>
    <property type="project" value="TreeGrafter"/>
</dbReference>
<dbReference type="GO" id="GO:0030490">
    <property type="term" value="P:maturation of SSU-rRNA"/>
    <property type="evidence" value="ECO:0007669"/>
    <property type="project" value="UniProtKB-UniRule"/>
</dbReference>
<dbReference type="Gene3D" id="3.30.300.20">
    <property type="match status" value="1"/>
</dbReference>
<dbReference type="HAMAP" id="MF_00003">
    <property type="entry name" value="RbfA"/>
    <property type="match status" value="1"/>
</dbReference>
<dbReference type="InterPro" id="IPR015946">
    <property type="entry name" value="KH_dom-like_a/b"/>
</dbReference>
<dbReference type="InterPro" id="IPR000238">
    <property type="entry name" value="RbfA"/>
</dbReference>
<dbReference type="InterPro" id="IPR023799">
    <property type="entry name" value="RbfA_dom_sf"/>
</dbReference>
<dbReference type="NCBIfam" id="TIGR00082">
    <property type="entry name" value="rbfA"/>
    <property type="match status" value="1"/>
</dbReference>
<dbReference type="PANTHER" id="PTHR33515">
    <property type="entry name" value="RIBOSOME-BINDING FACTOR A, CHLOROPLASTIC-RELATED"/>
    <property type="match status" value="1"/>
</dbReference>
<dbReference type="PANTHER" id="PTHR33515:SF1">
    <property type="entry name" value="RIBOSOME-BINDING FACTOR A, CHLOROPLASTIC-RELATED"/>
    <property type="match status" value="1"/>
</dbReference>
<dbReference type="Pfam" id="PF02033">
    <property type="entry name" value="RBFA"/>
    <property type="match status" value="1"/>
</dbReference>
<dbReference type="SUPFAM" id="SSF89919">
    <property type="entry name" value="Ribosome-binding factor A, RbfA"/>
    <property type="match status" value="1"/>
</dbReference>
<feature type="chain" id="PRO_0000321250" description="Ribosome-binding factor A">
    <location>
        <begin position="1"/>
        <end position="130"/>
    </location>
</feature>